<feature type="chain" id="PRO_0000442348" description="Transcription factor MYB10">
    <location>
        <begin position="1"/>
        <end position="239"/>
    </location>
</feature>
<feature type="domain" description="HTH myb-type 1" evidence="1">
    <location>
        <begin position="11"/>
        <end position="63"/>
    </location>
</feature>
<feature type="domain" description="HTH myb-type 2" evidence="1">
    <location>
        <begin position="64"/>
        <end position="118"/>
    </location>
</feature>
<feature type="DNA-binding region" description="H-T-H motif" evidence="1">
    <location>
        <begin position="39"/>
        <end position="63"/>
    </location>
</feature>
<feature type="DNA-binding region" description="H-T-H motif" evidence="1">
    <location>
        <begin position="91"/>
        <end position="114"/>
    </location>
</feature>
<name>MYB10_ARATH</name>
<reference key="1">
    <citation type="submission" date="2004-01" db="EMBL/GenBank/DDBJ databases">
        <title>The MYB transcription factor family in Arabidopsis: A genome-wide cloning and expression pattern analysis.</title>
        <authorList>
            <person name="Qu L."/>
            <person name="Gu H."/>
        </authorList>
    </citation>
    <scope>NUCLEOTIDE SEQUENCE [MRNA]</scope>
</reference>
<reference key="2">
    <citation type="journal article" date="2000" name="DNA Res.">
        <title>Structural analysis of Arabidopsis thaliana chromosome 3. I. Sequence features of the regions of 4,504,864 bp covered by sixty P1 and TAC clones.</title>
        <authorList>
            <person name="Sato S."/>
            <person name="Nakamura Y."/>
            <person name="Kaneko T."/>
            <person name="Katoh T."/>
            <person name="Asamizu E."/>
            <person name="Tabata S."/>
        </authorList>
    </citation>
    <scope>NUCLEOTIDE SEQUENCE [LARGE SCALE GENOMIC DNA]</scope>
    <source>
        <strain>cv. Columbia</strain>
    </source>
</reference>
<reference key="3">
    <citation type="journal article" date="2017" name="Plant J.">
        <title>Araport11: a complete reannotation of the Arabidopsis thaliana reference genome.</title>
        <authorList>
            <person name="Cheng C.Y."/>
            <person name="Krishnakumar V."/>
            <person name="Chan A.P."/>
            <person name="Thibaud-Nissen F."/>
            <person name="Schobel S."/>
            <person name="Town C.D."/>
        </authorList>
    </citation>
    <scope>GENOME REANNOTATION</scope>
    <source>
        <strain>cv. Columbia</strain>
    </source>
</reference>
<reference key="4">
    <citation type="journal article" date="1998" name="Plant J.">
        <title>Towards functional characterisation of the members of the R2R3-MYB gene family from Arabidopsis thaliana.</title>
        <authorList>
            <person name="Kranz H.D."/>
            <person name="Denekamp M."/>
            <person name="Greco R."/>
            <person name="Jin H.-L."/>
            <person name="Leyva A."/>
            <person name="Meissner R.C."/>
            <person name="Petroni K."/>
            <person name="Urzainqui A."/>
            <person name="Bevan M."/>
            <person name="Martin C."/>
            <person name="Smeekens S."/>
            <person name="Tonelli C."/>
            <person name="Paz-Ares J."/>
            <person name="Weisshaar B."/>
        </authorList>
    </citation>
    <scope>NUCLEOTIDE SEQUENCE [MRNA] OF 71-239</scope>
    <scope>TISSUE SPECIFICITY</scope>
    <scope>INDUCTION BY ETHYLENE AND DARKNESS</scope>
    <scope>GENE FAMILY</scope>
    <scope>NOMENCLATURE</scope>
    <source>
        <strain>cv. Columbia</strain>
    </source>
</reference>
<reference key="5">
    <citation type="journal article" date="2001" name="Curr. Opin. Plant Biol.">
        <title>The R2R3-MYB gene family in Arabidopsis thaliana.</title>
        <authorList>
            <person name="Stracke R."/>
            <person name="Werber M."/>
            <person name="Weisshaar B."/>
        </authorList>
    </citation>
    <scope>GENE FAMILY</scope>
    <scope>NOMENCLATURE</scope>
    <source>
        <strain>cv. Columbia</strain>
    </source>
</reference>
<reference key="6">
    <citation type="journal article" date="2004" name="Plant Physiol.">
        <title>Cesium toxicity in Arabidopsis.</title>
        <authorList>
            <person name="Hampton C.R."/>
            <person name="Bowen H.C."/>
            <person name="Broadley M.R."/>
            <person name="Hammond J.P."/>
            <person name="Mead A."/>
            <person name="Payne K.A."/>
            <person name="Pritchard J."/>
            <person name="White P.J."/>
        </authorList>
    </citation>
    <scope>INDUCTION BY POTASSIUM STARVATION</scope>
</reference>
<reference key="7">
    <citation type="journal article" date="2006" name="Plant Mol. Biol.">
        <title>The MYB transcription factor superfamily of Arabidopsis: expression analysis and phylogenetic comparison with the rice MYB family.</title>
        <authorList>
            <person name="Chen Y."/>
            <person name="Yang X."/>
            <person name="He K."/>
            <person name="Liu M."/>
            <person name="Li J."/>
            <person name="Gao Z."/>
            <person name="Lin Z."/>
            <person name="Zhang Y."/>
            <person name="Wang X."/>
            <person name="Qiu X."/>
            <person name="Shen Y."/>
            <person name="Zhang L."/>
            <person name="Deng X."/>
            <person name="Luo J."/>
            <person name="Deng X.-W."/>
            <person name="Chen Z."/>
            <person name="Gu H."/>
            <person name="Qu L.-J."/>
        </authorList>
    </citation>
    <scope>GENE FAMILY</scope>
</reference>
<reference key="8">
    <citation type="journal article" date="2008" name="Plant Cell Environ.">
        <title>Expression differences for genes involved in lignin, glutathione and sulphate metabolism in response to cadmium in Arabidopsis thaliana and the related Zn/Cd-hyperaccumulator Thlaspi caerulescens.</title>
        <authorList>
            <person name="van de Mortel J.E."/>
            <person name="Schat H."/>
            <person name="Moerland P.D."/>
            <person name="Ver Loren van Themaat E."/>
            <person name="van der Ent S."/>
            <person name="Blankestijn H."/>
            <person name="Ghandilyan A."/>
            <person name="Tsiatsiani S."/>
            <person name="Aarts M.G.M."/>
        </authorList>
    </citation>
    <scope>INDUCTION BY ZINC AND CADMIUM</scope>
    <source>
        <strain>cv. Columbia</strain>
    </source>
</reference>
<reference key="9">
    <citation type="journal article" date="2013" name="PLoS Genet.">
        <title>MYB10 and MYB72 are required for growth under iron-limiting conditions.</title>
        <authorList>
            <person name="Palmer C.M."/>
            <person name="Hindt M.N."/>
            <person name="Schmidt H."/>
            <person name="Clemens S."/>
            <person name="Guerinot M.L."/>
        </authorList>
    </citation>
    <scope>FUNCTION</scope>
    <scope>DISRUPTION PHENOTYPE</scope>
    <scope>INDUCTION BY IRON STARVATION</scope>
    <scope>SUBCELLULAR LOCATION</scope>
    <source>
        <strain>cv. Columbia</strain>
    </source>
</reference>
<keyword id="KW-0238">DNA-binding</keyword>
<keyword id="KW-0539">Nucleus</keyword>
<keyword id="KW-1185">Reference proteome</keyword>
<keyword id="KW-0677">Repeat</keyword>
<keyword id="KW-0804">Transcription</keyword>
<keyword id="KW-0805">Transcription regulation</keyword>
<accession>Q9LTV4</accession>
<accession>Q9ZTF3</accession>
<sequence length="239" mass="27317">MGNRRAPCCDKSQVKRGPWSDEESERLRSFILKNGHQNWRSLPKLAGLMRCGKSCRLRWINYLRPGLKRGNFTKEEEDTIIHLHQAYGNKWSKIASNFPGRTDNEIKNVWNTHLKKRLVKRSISSSSSDVTNHSVSSTSSSSSSISSVLQDVIIKSERPNQEEEFGEILVEQMACGFEVDAPQSLECLFDDSQVPPPISKPDSLQTHGKSSDHEFWSRLIEPGFDDYNEWLIFLDNQTC</sequence>
<organism>
    <name type="scientific">Arabidopsis thaliana</name>
    <name type="common">Mouse-ear cress</name>
    <dbReference type="NCBI Taxonomy" id="3702"/>
    <lineage>
        <taxon>Eukaryota</taxon>
        <taxon>Viridiplantae</taxon>
        <taxon>Streptophyta</taxon>
        <taxon>Embryophyta</taxon>
        <taxon>Tracheophyta</taxon>
        <taxon>Spermatophyta</taxon>
        <taxon>Magnoliopsida</taxon>
        <taxon>eudicotyledons</taxon>
        <taxon>Gunneridae</taxon>
        <taxon>Pentapetalae</taxon>
        <taxon>rosids</taxon>
        <taxon>malvids</taxon>
        <taxon>Brassicales</taxon>
        <taxon>Brassicaceae</taxon>
        <taxon>Camelineae</taxon>
        <taxon>Arabidopsis</taxon>
    </lineage>
</organism>
<gene>
    <name evidence="8" type="primary">MYB10</name>
    <name evidence="7" type="ordered locus">At3g12820</name>
</gene>
<proteinExistence type="evidence at transcript level"/>
<comment type="function">
    <text evidence="4">Involved in metal ions homeostasis, including iron ions (Fe) acquisition, via the regulation of NAS4 and NAS2 genes expression. Necessary for plant survival in alkaline soil where iron availability is greatly restricted. Triggers tolerance to nickel (Ni) and zinc (Zn) ions.</text>
</comment>
<comment type="subcellular location">
    <subcellularLocation>
        <location evidence="1 4">Nucleus</location>
    </subcellularLocation>
</comment>
<comment type="tissue specificity">
    <text evidence="5">Expressed in cauline leaves and siliques.</text>
</comment>
<comment type="induction">
    <text evidence="2 3 4 5">Accumulates strongly in the root stele and in the outer layers of the lateral roots when exposed to iron (Fe)-deficient conditions (PubMed:24278034). Slightly induced by ethylene and by darkness conditions (PubMed:9839469). Accumulates upon potassium (K) depletion (PubMed:15489280). Induced by zinc (Zn) and cadmium (Cd) ions (PubMed:18088336).</text>
</comment>
<comment type="disruption phenotype">
    <text evidence="4">Plants lacking myb10 and myb72 fail to induce transcript accumulation of the nicotianamine synthase genes NAS4 and NAS2 in iron ions (Fe) deficiency, and exhibits nickel (Ni) and zinc (Zn) sensitivity.</text>
</comment>
<evidence type="ECO:0000255" key="1">
    <source>
        <dbReference type="PROSITE-ProRule" id="PRU00625"/>
    </source>
</evidence>
<evidence type="ECO:0000269" key="2">
    <source>
    </source>
</evidence>
<evidence type="ECO:0000269" key="3">
    <source>
    </source>
</evidence>
<evidence type="ECO:0000269" key="4">
    <source>
    </source>
</evidence>
<evidence type="ECO:0000269" key="5">
    <source>
    </source>
</evidence>
<evidence type="ECO:0000303" key="6">
    <source>
    </source>
</evidence>
<evidence type="ECO:0000312" key="7">
    <source>
        <dbReference type="Araport" id="AT3G12820"/>
    </source>
</evidence>
<evidence type="ECO:0000312" key="8">
    <source>
        <dbReference type="EMBL" id="AEE75249.1"/>
    </source>
</evidence>
<dbReference type="EMBL" id="AY519586">
    <property type="protein sequence ID" value="AAS10056.1"/>
    <property type="molecule type" value="mRNA"/>
</dbReference>
<dbReference type="EMBL" id="AB024033">
    <property type="protein sequence ID" value="BAB02426.1"/>
    <property type="molecule type" value="Genomic_DNA"/>
</dbReference>
<dbReference type="EMBL" id="CP002686">
    <property type="protein sequence ID" value="AEE75249.1"/>
    <property type="molecule type" value="Genomic_DNA"/>
</dbReference>
<dbReference type="EMBL" id="AF062862">
    <property type="protein sequence ID" value="AAC83584.1"/>
    <property type="molecule type" value="mRNA"/>
</dbReference>
<dbReference type="PIR" id="T51634">
    <property type="entry name" value="T51634"/>
</dbReference>
<dbReference type="RefSeq" id="NP_187888.1">
    <property type="nucleotide sequence ID" value="NM_112118.3"/>
</dbReference>
<dbReference type="SMR" id="Q9LTV4"/>
<dbReference type="FunCoup" id="Q9LTV4">
    <property type="interactions" value="1"/>
</dbReference>
<dbReference type="IntAct" id="Q9LTV4">
    <property type="interactions" value="2"/>
</dbReference>
<dbReference type="STRING" id="3702.Q9LTV4"/>
<dbReference type="PaxDb" id="3702-AT3G12820.1"/>
<dbReference type="EnsemblPlants" id="AT3G12820.1">
    <property type="protein sequence ID" value="AT3G12820.1"/>
    <property type="gene ID" value="AT3G12820"/>
</dbReference>
<dbReference type="GeneID" id="820464"/>
<dbReference type="Gramene" id="AT3G12820.1">
    <property type="protein sequence ID" value="AT3G12820.1"/>
    <property type="gene ID" value="AT3G12820"/>
</dbReference>
<dbReference type="KEGG" id="ath:AT3G12820"/>
<dbReference type="Araport" id="AT3G12820"/>
<dbReference type="TAIR" id="AT3G12820">
    <property type="gene designation" value="MYB10"/>
</dbReference>
<dbReference type="eggNOG" id="KOG0048">
    <property type="taxonomic scope" value="Eukaryota"/>
</dbReference>
<dbReference type="HOGENOM" id="CLU_028567_25_6_1"/>
<dbReference type="InParanoid" id="Q9LTV4"/>
<dbReference type="OMA" id="WSHEESE"/>
<dbReference type="OrthoDB" id="2143914at2759"/>
<dbReference type="PhylomeDB" id="Q9LTV4"/>
<dbReference type="PRO" id="PR:Q9LTV4"/>
<dbReference type="Proteomes" id="UP000006548">
    <property type="component" value="Chromosome 3"/>
</dbReference>
<dbReference type="ExpressionAtlas" id="Q9LTV4">
    <property type="expression patterns" value="baseline and differential"/>
</dbReference>
<dbReference type="GO" id="GO:0005634">
    <property type="term" value="C:nucleus"/>
    <property type="evidence" value="ECO:0000314"/>
    <property type="project" value="UniProtKB"/>
</dbReference>
<dbReference type="GO" id="GO:0003677">
    <property type="term" value="F:DNA binding"/>
    <property type="evidence" value="ECO:0007669"/>
    <property type="project" value="UniProtKB-KW"/>
</dbReference>
<dbReference type="GO" id="GO:0003700">
    <property type="term" value="F:DNA-binding transcription factor activity"/>
    <property type="evidence" value="ECO:0000250"/>
    <property type="project" value="TAIR"/>
</dbReference>
<dbReference type="GO" id="GO:0010468">
    <property type="term" value="P:regulation of gene expression"/>
    <property type="evidence" value="ECO:0000315"/>
    <property type="project" value="UniProtKB"/>
</dbReference>
<dbReference type="GO" id="GO:0009646">
    <property type="term" value="P:response to absence of light"/>
    <property type="evidence" value="ECO:0000270"/>
    <property type="project" value="UniProtKB"/>
</dbReference>
<dbReference type="GO" id="GO:0009723">
    <property type="term" value="P:response to ethylene"/>
    <property type="evidence" value="ECO:0000270"/>
    <property type="project" value="UniProtKB"/>
</dbReference>
<dbReference type="GO" id="GO:1990641">
    <property type="term" value="P:response to iron ion starvation"/>
    <property type="evidence" value="ECO:0000315"/>
    <property type="project" value="UniProtKB"/>
</dbReference>
<dbReference type="GO" id="GO:0010043">
    <property type="term" value="P:response to zinc ion"/>
    <property type="evidence" value="ECO:0000250"/>
    <property type="project" value="UniProtKB"/>
</dbReference>
<dbReference type="GO" id="GO:1990532">
    <property type="term" value="P:stress response to nickel ion"/>
    <property type="evidence" value="ECO:0000315"/>
    <property type="project" value="UniProtKB"/>
</dbReference>
<dbReference type="CDD" id="cd00167">
    <property type="entry name" value="SANT"/>
    <property type="match status" value="2"/>
</dbReference>
<dbReference type="FunFam" id="1.10.10.60:FF:000310">
    <property type="entry name" value="MYB transcription factor"/>
    <property type="match status" value="1"/>
</dbReference>
<dbReference type="FunFam" id="1.10.10.60:FF:000015">
    <property type="entry name" value="Transcription factor RAX3"/>
    <property type="match status" value="1"/>
</dbReference>
<dbReference type="Gene3D" id="1.10.10.60">
    <property type="entry name" value="Homeodomain-like"/>
    <property type="match status" value="2"/>
</dbReference>
<dbReference type="InterPro" id="IPR009057">
    <property type="entry name" value="Homeodomain-like_sf"/>
</dbReference>
<dbReference type="InterPro" id="IPR017930">
    <property type="entry name" value="Myb_dom"/>
</dbReference>
<dbReference type="InterPro" id="IPR051953">
    <property type="entry name" value="Plant_SW-associated_TFs"/>
</dbReference>
<dbReference type="InterPro" id="IPR001005">
    <property type="entry name" value="SANT/Myb"/>
</dbReference>
<dbReference type="PANTHER" id="PTHR47997">
    <property type="entry name" value="MYB DOMAIN PROTEIN 55"/>
    <property type="match status" value="1"/>
</dbReference>
<dbReference type="PANTHER" id="PTHR47997:SF75">
    <property type="entry name" value="MYB DOMAIN PROTEIN 55"/>
    <property type="match status" value="1"/>
</dbReference>
<dbReference type="Pfam" id="PF00249">
    <property type="entry name" value="Myb_DNA-binding"/>
    <property type="match status" value="2"/>
</dbReference>
<dbReference type="SMART" id="SM00717">
    <property type="entry name" value="SANT"/>
    <property type="match status" value="2"/>
</dbReference>
<dbReference type="SUPFAM" id="SSF46689">
    <property type="entry name" value="Homeodomain-like"/>
    <property type="match status" value="1"/>
</dbReference>
<dbReference type="PROSITE" id="PS51294">
    <property type="entry name" value="HTH_MYB"/>
    <property type="match status" value="2"/>
</dbReference>
<protein>
    <recommendedName>
        <fullName evidence="6">Transcription factor MYB10</fullName>
    </recommendedName>
    <alternativeName>
        <fullName evidence="6">Myb-related protein 10</fullName>
        <shortName evidence="6">AtMYB10</shortName>
    </alternativeName>
</protein>